<organism>
    <name type="scientific">Rotavirus A (strain RVA/SA11-Both/G3P5B[2])</name>
    <name type="common">RV-A</name>
    <name type="synonym">Simian Agent 11 (strain Both)</name>
    <dbReference type="NCBI Taxonomy" id="37137"/>
    <lineage>
        <taxon>Viruses</taxon>
        <taxon>Riboviria</taxon>
        <taxon>Orthornavirae</taxon>
        <taxon>Duplornaviricota</taxon>
        <taxon>Resentoviricetes</taxon>
        <taxon>Reovirales</taxon>
        <taxon>Sedoreoviridae</taxon>
        <taxon>Rotavirus</taxon>
        <taxon>Rotavirus A</taxon>
    </lineage>
</organism>
<accession>P03531</accession>
<accession>Q6Y3A1</accession>
<accession>Q86230</accession>
<protein>
    <recommendedName>
        <fullName evidence="1">Intermediate capsid protein VP6</fullName>
    </recommendedName>
</protein>
<comment type="function">
    <text evidence="1">Intermediate capsid protein that self assembles to form an icosahedral capsid with a T=13 symmetry, which consists of 230 trimers of VP6, with channels at each of its five-fold vertices. This capsid constitutes the middle concentric layer of the viral mature particle. The innermost VP2 capsid and the intermediate VP6 capsid remain intact following cell entry to protect the dsRNA from degradation and to prevent unfavorable antiviral responses in the host cell during all the replication cycle of the virus. Nascent transcripts are transcribed within the structural confines of this double-layered particle (DLP) and are extruded through the channels at the five-fold axes. VP6 is required for the transcription activity of the DLP.</text>
</comment>
<comment type="subunit">
    <text evidence="1">Homotrimer. Interacts with the inner capsid protein VP2. Interacts with the outer capsid glycoprotein VP7. Interacts with the outer capsid protein VP5*.</text>
</comment>
<comment type="subcellular location">
    <subcellularLocation>
        <location evidence="1">Virion</location>
    </subcellularLocation>
    <text evidence="1">Component of the intermediate capsid. Also found in spherical cytoplasmic structures, called virus factories, that appear early after infection and are the site of viral replication and packaging.</text>
</comment>
<comment type="PTM">
    <text evidence="1">The N-terminus is blocked.</text>
</comment>
<comment type="PTM">
    <text evidence="1">Sumoylated with SUMO1 and SUMO2. Sumoylation of viral proteins seems to have a positive role on viral replication.</text>
</comment>
<comment type="miscellaneous">
    <text evidence="1">The VP6 trimer contains a zinc ion located at the center of the molecule. The zinc ion is not essential for either trimerization or transcription activity of the DLP. Zinc-depleted VP6 has an increased sensitivity to proteases.</text>
</comment>
<comment type="similarity">
    <text evidence="1">Belongs to the rotavirus VP6 family.</text>
</comment>
<reference key="1">
    <citation type="journal article" date="1989" name="Gene">
        <title>Cloning and expression of the major inner capsid protein of SA-11 simian rotavirus in Escherichia coli.</title>
        <authorList>
            <person name="Smith R.E."/>
            <person name="Kister S.E."/>
            <person name="Carozzi N.B."/>
        </authorList>
    </citation>
    <scope>NUCLEOTIDE SEQUENCE [GENOMIC RNA]</scope>
</reference>
<reference key="2">
    <citation type="journal article" date="1984" name="Nucleic Acids Res.">
        <title>Cloning and nucleotide sequence of the simian rotavirus gene 6 that codes for the major inner capsid protein.</title>
        <authorList>
            <person name="Estes M.K."/>
            <person name="Mason B.B."/>
            <person name="Crawford S.E."/>
            <person name="Cohen J."/>
        </authorList>
    </citation>
    <scope>NUCLEOTIDE SEQUENCE [GENOMIC RNA]</scope>
</reference>
<reference key="3">
    <citation type="journal article" date="1984" name="J. Virol.">
        <title>Comparative sequence analysis of rotavirus genomic segment 6 -- the gene specifying viral subgroups 1 and 2.</title>
        <authorList>
            <person name="Both G.W."/>
            <person name="Siegman L.J."/>
            <person name="Bellamy A.R."/>
            <person name="Ikegami N."/>
            <person name="Shatkin A.J."/>
            <person name="Furuichi Y."/>
        </authorList>
    </citation>
    <scope>NUCLEOTIDE SEQUENCE [GENOMIC RNA]</scope>
</reference>
<reference key="4">
    <citation type="journal article" date="1994" name="Virology">
        <title>Temperature-sensitive lesions in the capsid proteins of the rotavirus mutants tsF and tsG that affect virion assembly.</title>
        <authorList>
            <person name="Mansell E.A."/>
            <person name="Ramig R.F."/>
            <person name="Patton J.T."/>
        </authorList>
    </citation>
    <scope>NUCLEOTIDE SEQUENCE [GENOMIC RNA]</scope>
    <source>
        <strain>Isolate temperature-sensitive mutant G</strain>
    </source>
</reference>
<reference key="5">
    <citation type="submission" date="2002-11" db="EMBL/GenBank/DDBJ databases">
        <title>Complete nucleotide sequence of Simian rotavirus.</title>
        <authorList>
            <person name="Mitchell D.B."/>
            <person name="Both G.W."/>
        </authorList>
    </citation>
    <scope>NUCLEOTIDE SEQUENCE [GENOMIC RNA]</scope>
</reference>
<organismHost>
    <name type="scientific">Macaca mulatta</name>
    <name type="common">Rhesus macaque</name>
    <dbReference type="NCBI Taxonomy" id="9544"/>
</organismHost>
<proteinExistence type="inferred from homology"/>
<keyword id="KW-0106">Calcium</keyword>
<keyword id="KW-0167">Capsid protein</keyword>
<keyword id="KW-1154">Intermediate capsid protein</keyword>
<keyword id="KW-0479">Metal-binding</keyword>
<keyword id="KW-1185">Reference proteome</keyword>
<keyword id="KW-0832">Ubl conjugation</keyword>
<keyword id="KW-0946">Virion</keyword>
<keyword id="KW-0862">Zinc</keyword>
<dbReference type="EMBL" id="M27824">
    <property type="protein sequence ID" value="AAA47397.1"/>
    <property type="molecule type" value="Genomic_RNA"/>
</dbReference>
<dbReference type="EMBL" id="X00421">
    <property type="protein sequence ID" value="CAA25122.1"/>
    <property type="molecule type" value="Genomic_RNA"/>
</dbReference>
<dbReference type="EMBL" id="AY187029">
    <property type="protein sequence ID" value="AAO32085.1"/>
    <property type="molecule type" value="Genomic_RNA"/>
</dbReference>
<dbReference type="EMBL" id="L15384">
    <property type="protein sequence ID" value="AAA65638.1"/>
    <property type="molecule type" value="Genomic_RNA"/>
</dbReference>
<dbReference type="PIR" id="A93002">
    <property type="entry name" value="VPXR6S"/>
</dbReference>
<dbReference type="PIR" id="JQ0019">
    <property type="entry name" value="VPXR11"/>
</dbReference>
<dbReference type="SMR" id="P03531"/>
<dbReference type="Proteomes" id="UP000007180">
    <property type="component" value="Genome"/>
</dbReference>
<dbReference type="GO" id="GO:0019031">
    <property type="term" value="C:viral envelope"/>
    <property type="evidence" value="ECO:0007669"/>
    <property type="project" value="UniProtKB-UniRule"/>
</dbReference>
<dbReference type="GO" id="GO:0039626">
    <property type="term" value="C:viral intermediate capsid"/>
    <property type="evidence" value="ECO:0007669"/>
    <property type="project" value="UniProtKB-UniRule"/>
</dbReference>
<dbReference type="GO" id="GO:0046789">
    <property type="term" value="F:host cell surface receptor binding"/>
    <property type="evidence" value="ECO:0007669"/>
    <property type="project" value="UniProtKB-UniRule"/>
</dbReference>
<dbReference type="GO" id="GO:0046872">
    <property type="term" value="F:metal ion binding"/>
    <property type="evidence" value="ECO:0007669"/>
    <property type="project" value="UniProtKB-UniRule"/>
</dbReference>
<dbReference type="GO" id="GO:0005198">
    <property type="term" value="F:structural molecule activity"/>
    <property type="evidence" value="ECO:0007669"/>
    <property type="project" value="UniProtKB-UniRule"/>
</dbReference>
<dbReference type="GO" id="GO:0019064">
    <property type="term" value="P:fusion of virus membrane with host plasma membrane"/>
    <property type="evidence" value="ECO:0007669"/>
    <property type="project" value="UniProtKB-UniRule"/>
</dbReference>
<dbReference type="FunFam" id="2.60.120.170:FF:000001">
    <property type="entry name" value="Intermediate capsid protein VP6"/>
    <property type="match status" value="1"/>
</dbReference>
<dbReference type="Gene3D" id="2.60.120.170">
    <property type="match status" value="1"/>
</dbReference>
<dbReference type="Gene3D" id="1.10.1350.10">
    <property type="entry name" value="Viral capsid alpha domain"/>
    <property type="match status" value="1"/>
</dbReference>
<dbReference type="HAMAP" id="MF_04126">
    <property type="entry name" value="Rota_VP6"/>
    <property type="match status" value="1"/>
</dbReference>
<dbReference type="HAMAP" id="MF_04129">
    <property type="entry name" value="Rota_VP6_A"/>
    <property type="match status" value="1"/>
</dbReference>
<dbReference type="InterPro" id="IPR008980">
    <property type="entry name" value="Capsid_hemagglutn"/>
</dbReference>
<dbReference type="InterPro" id="IPR001385">
    <property type="entry name" value="Rotavirus_A/C_VP6"/>
</dbReference>
<dbReference type="InterPro" id="IPR008935">
    <property type="entry name" value="Virus_capsid_a-hlx_vir"/>
</dbReference>
<dbReference type="Pfam" id="PF00980">
    <property type="entry name" value="Rota_Capsid_VP6"/>
    <property type="match status" value="1"/>
</dbReference>
<dbReference type="SUPFAM" id="SSF48345">
    <property type="entry name" value="A virus capsid protein alpha-helical domain"/>
    <property type="match status" value="1"/>
</dbReference>
<dbReference type="SUPFAM" id="SSF49818">
    <property type="entry name" value="Viral protein domain"/>
    <property type="match status" value="1"/>
</dbReference>
<sequence length="397" mass="44873">MDVLYSLSKTLKDARDKIVEGTLYSNVSDLIQQFNQMIITMNGNEFQTGGIGNLPIRNWNFNFGLLGTTLLNLDANYVETARNTIDYFVDFVDNVCMDEMVRESQRNGIAPQSDSLRKLSAIKFKRINFDNSSEYIENWNLQNRRQRTGFTFHKPNIFPYSASFTLNRSQPAHDNLMGTMWLNAGSEIQVAGFDYSCAINAPANIQQFEHIVPLRRVLTTATITLLPDAERFSFPRVINSADGATTWFFNPVILRPNNVEVEFLLNGQIINTYQARFGTIVARNFDTIRLSFQLMRPPNMTPAVAVLFPNAQPFEHHATVGLTLRIESAVCESVLADASETLLANVTSVRQEYAIPVGPVFPPGMNWTDLITNYSPSREDNLQRVFTVASIRSMLIK</sequence>
<name>VP6_ROTS1</name>
<evidence type="ECO:0000255" key="1">
    <source>
        <dbReference type="HAMAP-Rule" id="MF_04129"/>
    </source>
</evidence>
<evidence type="ECO:0000305" key="2"/>
<feature type="chain" id="PRO_0000149577" description="Intermediate capsid protein VP6">
    <location>
        <begin position="1"/>
        <end position="397"/>
    </location>
</feature>
<feature type="region of interest" description="Interaction with the inner capsid protein VP2" evidence="1">
    <location>
        <begin position="62"/>
        <end position="73"/>
    </location>
</feature>
<feature type="binding site" evidence="1">
    <location>
        <position position="153"/>
    </location>
    <ligand>
        <name>Zn(2+)</name>
        <dbReference type="ChEBI" id="CHEBI:29105"/>
        <note>ligand shared between all trimeric partners</note>
    </ligand>
</feature>
<feature type="binding site" evidence="1">
    <location>
        <position position="266"/>
    </location>
    <ligand>
        <name>Ca(2+)</name>
        <dbReference type="ChEBI" id="CHEBI:29108"/>
    </ligand>
</feature>
<feature type="binding site" evidence="1">
    <location>
        <position position="286"/>
    </location>
    <ligand>
        <name>Ca(2+)</name>
        <dbReference type="ChEBI" id="CHEBI:29108"/>
    </ligand>
</feature>
<feature type="sequence variant" description="In strain: Isolate temperature-sensitive mutant G.">
    <original>T</original>
    <variation>S</variation>
    <location>
        <position position="10"/>
    </location>
</feature>
<feature type="sequence variant" description="In strain: Isolate temperature-sensitive mutant G.">
    <original>D</original>
    <variation>H</variation>
    <location>
        <position position="13"/>
    </location>
</feature>
<feature type="sequence variant" description="In strain: Isolate temperature-sensitive mutant G.">
    <original>A</original>
    <variation>G</variation>
    <location>
        <position position="121"/>
    </location>
</feature>
<feature type="sequence conflict" description="In Ref. 3 and 5; AAO32085." evidence="2" ref="3 5">
    <original>F</original>
    <variation>Y</variation>
    <location>
        <position position="164"/>
    </location>
</feature>
<feature type="sequence conflict" description="In Ref. 3 and 5; AAO32085." evidence="2" ref="3 5">
    <original>V</original>
    <variation>I</variation>
    <location>
        <position position="385"/>
    </location>
</feature>